<organism>
    <name type="scientific">Arabidopsis thaliana</name>
    <name type="common">Mouse-ear cress</name>
    <dbReference type="NCBI Taxonomy" id="3702"/>
    <lineage>
        <taxon>Eukaryota</taxon>
        <taxon>Viridiplantae</taxon>
        <taxon>Streptophyta</taxon>
        <taxon>Embryophyta</taxon>
        <taxon>Tracheophyta</taxon>
        <taxon>Spermatophyta</taxon>
        <taxon>Magnoliopsida</taxon>
        <taxon>eudicotyledons</taxon>
        <taxon>Gunneridae</taxon>
        <taxon>Pentapetalae</taxon>
        <taxon>rosids</taxon>
        <taxon>malvids</taxon>
        <taxon>Brassicales</taxon>
        <taxon>Brassicaceae</taxon>
        <taxon>Camelineae</taxon>
        <taxon>Arabidopsis</taxon>
    </lineage>
</organism>
<evidence type="ECO:0000255" key="1"/>
<evidence type="ECO:0000305" key="2"/>
<gene>
    <name type="primary">PCMP-E15</name>
    <name type="ordered locus">At2g35030</name>
    <name type="ORF">F19I3.26</name>
</gene>
<name>PP185_ARATH</name>
<dbReference type="EMBL" id="AC004238">
    <property type="protein sequence ID" value="AAC12843.1"/>
    <property type="molecule type" value="Genomic_DNA"/>
</dbReference>
<dbReference type="EMBL" id="CP002685">
    <property type="protein sequence ID" value="AEC09051.1"/>
    <property type="molecule type" value="Genomic_DNA"/>
</dbReference>
<dbReference type="EMBL" id="BT046115">
    <property type="protein sequence ID" value="ACI46503.1"/>
    <property type="molecule type" value="mRNA"/>
</dbReference>
<dbReference type="PIR" id="T00484">
    <property type="entry name" value="T00484"/>
</dbReference>
<dbReference type="RefSeq" id="NP_181048.1">
    <property type="nucleotide sequence ID" value="NM_129055.4"/>
</dbReference>
<dbReference type="SMR" id="O64766"/>
<dbReference type="FunCoup" id="O64766">
    <property type="interactions" value="520"/>
</dbReference>
<dbReference type="iPTMnet" id="O64766"/>
<dbReference type="PaxDb" id="3702-AT2G35030.1"/>
<dbReference type="ProteomicsDB" id="249079"/>
<dbReference type="EnsemblPlants" id="AT2G35030.1">
    <property type="protein sequence ID" value="AT2G35030.1"/>
    <property type="gene ID" value="AT2G35030"/>
</dbReference>
<dbReference type="GeneID" id="818067"/>
<dbReference type="Gramene" id="AT2G35030.1">
    <property type="protein sequence ID" value="AT2G35030.1"/>
    <property type="gene ID" value="AT2G35030"/>
</dbReference>
<dbReference type="KEGG" id="ath:AT2G35030"/>
<dbReference type="Araport" id="AT2G35030"/>
<dbReference type="TAIR" id="AT2G35030">
    <property type="gene designation" value="COD1"/>
</dbReference>
<dbReference type="eggNOG" id="KOG4197">
    <property type="taxonomic scope" value="Eukaryota"/>
</dbReference>
<dbReference type="HOGENOM" id="CLU_002706_30_5_1"/>
<dbReference type="InParanoid" id="O64766"/>
<dbReference type="OMA" id="KCGMIRE"/>
<dbReference type="PhylomeDB" id="O64766"/>
<dbReference type="PRO" id="PR:O64766"/>
<dbReference type="Proteomes" id="UP000006548">
    <property type="component" value="Chromosome 2"/>
</dbReference>
<dbReference type="ExpressionAtlas" id="O64766">
    <property type="expression patterns" value="baseline and differential"/>
</dbReference>
<dbReference type="GO" id="GO:0005739">
    <property type="term" value="C:mitochondrion"/>
    <property type="evidence" value="ECO:0007669"/>
    <property type="project" value="UniProtKB-SubCell"/>
</dbReference>
<dbReference type="GO" id="GO:0003723">
    <property type="term" value="F:RNA binding"/>
    <property type="evidence" value="ECO:0007669"/>
    <property type="project" value="InterPro"/>
</dbReference>
<dbReference type="GO" id="GO:0009451">
    <property type="term" value="P:RNA modification"/>
    <property type="evidence" value="ECO:0007669"/>
    <property type="project" value="InterPro"/>
</dbReference>
<dbReference type="FunFam" id="1.25.40.10:FF:000125">
    <property type="entry name" value="Pentatricopeptide repeat-containing protein"/>
    <property type="match status" value="2"/>
</dbReference>
<dbReference type="FunFam" id="1.25.40.10:FF:000158">
    <property type="entry name" value="pentatricopeptide repeat-containing protein At2g33680"/>
    <property type="match status" value="1"/>
</dbReference>
<dbReference type="FunFam" id="1.25.40.10:FF:001176">
    <property type="entry name" value="Pentatricopeptide repeat-containing protein At2g35030, mitochondrial"/>
    <property type="match status" value="1"/>
</dbReference>
<dbReference type="FunFam" id="1.25.40.10:FF:001220">
    <property type="entry name" value="Pentatricopeptide repeat-containing protein At2g35030, mitochondrial"/>
    <property type="match status" value="1"/>
</dbReference>
<dbReference type="Gene3D" id="1.25.40.10">
    <property type="entry name" value="Tetratricopeptide repeat domain"/>
    <property type="match status" value="5"/>
</dbReference>
<dbReference type="InterPro" id="IPR046848">
    <property type="entry name" value="E_motif"/>
</dbReference>
<dbReference type="InterPro" id="IPR002885">
    <property type="entry name" value="Pentatricopeptide_rpt"/>
</dbReference>
<dbReference type="InterPro" id="IPR046960">
    <property type="entry name" value="PPR_At4g14850-like_plant"/>
</dbReference>
<dbReference type="InterPro" id="IPR011990">
    <property type="entry name" value="TPR-like_helical_dom_sf"/>
</dbReference>
<dbReference type="NCBIfam" id="TIGR00756">
    <property type="entry name" value="PPR"/>
    <property type="match status" value="9"/>
</dbReference>
<dbReference type="PANTHER" id="PTHR47926">
    <property type="entry name" value="PENTATRICOPEPTIDE REPEAT-CONTAINING PROTEIN"/>
    <property type="match status" value="1"/>
</dbReference>
<dbReference type="Pfam" id="PF20431">
    <property type="entry name" value="E_motif"/>
    <property type="match status" value="1"/>
</dbReference>
<dbReference type="Pfam" id="PF01535">
    <property type="entry name" value="PPR"/>
    <property type="match status" value="7"/>
</dbReference>
<dbReference type="Pfam" id="PF13041">
    <property type="entry name" value="PPR_2"/>
    <property type="match status" value="2"/>
</dbReference>
<dbReference type="SUPFAM" id="SSF48452">
    <property type="entry name" value="TPR-like"/>
    <property type="match status" value="2"/>
</dbReference>
<dbReference type="PROSITE" id="PS51375">
    <property type="entry name" value="PPR"/>
    <property type="match status" value="15"/>
</dbReference>
<protein>
    <recommendedName>
        <fullName>Pentatricopeptide repeat-containing protein At2g35030, mitochondrial</fullName>
    </recommendedName>
</protein>
<keyword id="KW-0496">Mitochondrion</keyword>
<keyword id="KW-1185">Reference proteome</keyword>
<keyword id="KW-0677">Repeat</keyword>
<keyword id="KW-0809">Transit peptide</keyword>
<proteinExistence type="evidence at transcript level"/>
<accession>O64766</accession>
<sequence>MQSRALSRLRSYYKRSSVFPSSDNDRSVQLFNLVRSIYSSSSRPRVPQPEWLIGELCKVGKIAEARKLFDGLPERDVVTWTHVITGYIKLGDMREARELFDRVDSRKNVVTWTAMVSGYLRSKQLSIAEMLFQEMPERNVVSWNTMIDGYAQSGRIDKALELFDEMPERNIVSWNSMVKALVQRGRIDEAMNLFERMPRRDVVSWTAMVDGLAKNGKVDEARRLFDCMPERNIISWNAMITGYAQNNRIDEADQLFQVMPERDFASWNTMITGFIRNREMNKACGLFDRMPEKNVISWTTMITGYVENKENEEALNVFSKMLRDGSVKPNVGTYVSILSACSDLAGLVEGQQIHQLISKSVHQKNEIVTSALLNMYSKSGELIAARKMFDNGLVCQRDLISWNSMIAVYAHHGHGKEAIEMYNQMRKHGFKPSAVTYLNLLFACSHAGLVEKGMEFFKDLVRDESLPLREEHYTCLVDLCGRAGRLKDVTNFINCDDARLSRSFYGAILSACNVHNEVSIAKEVVKKVLETGSDDAGTYVLMSNIYAANGKREEAAEMRMKMKEKGLKKQPGCSWVKVGKQNHLFVVGDKSHPQFEALDSILSDLRNKMRKNKNVTSDAEEAEFLVI</sequence>
<feature type="transit peptide" description="Mitochondrion" evidence="1">
    <location>
        <begin position="1"/>
        <end position="44"/>
    </location>
</feature>
<feature type="chain" id="PRO_0000356044" description="Pentatricopeptide repeat-containing protein At2g35030, mitochondrial">
    <location>
        <begin position="45"/>
        <end position="627"/>
    </location>
</feature>
<feature type="repeat" description="PPR 1">
    <location>
        <begin position="45"/>
        <end position="75"/>
    </location>
</feature>
<feature type="repeat" description="PPR 2">
    <location>
        <begin position="76"/>
        <end position="110"/>
    </location>
</feature>
<feature type="repeat" description="PPR 3">
    <location>
        <begin position="111"/>
        <end position="138"/>
    </location>
</feature>
<feature type="repeat" description="PPR 4">
    <location>
        <begin position="139"/>
        <end position="173"/>
    </location>
</feature>
<feature type="repeat" description="PPR 5">
    <location>
        <begin position="174"/>
        <end position="200"/>
    </location>
</feature>
<feature type="repeat" description="PPR 6">
    <location>
        <begin position="201"/>
        <end position="235"/>
    </location>
</feature>
<feature type="repeat" description="PPR 7">
    <location>
        <begin position="236"/>
        <end position="262"/>
    </location>
</feature>
<feature type="repeat" description="PPR 8">
    <location>
        <begin position="263"/>
        <end position="293"/>
    </location>
</feature>
<feature type="repeat" description="PPR 9">
    <location>
        <begin position="294"/>
        <end position="328"/>
    </location>
</feature>
<feature type="repeat" description="PPR 10">
    <location>
        <begin position="330"/>
        <end position="360"/>
    </location>
</feature>
<feature type="repeat" description="PPR 11">
    <location>
        <begin position="365"/>
        <end position="396"/>
    </location>
</feature>
<feature type="repeat" description="PPR 12">
    <location>
        <begin position="398"/>
        <end position="432"/>
    </location>
</feature>
<feature type="repeat" description="PPR 13">
    <location>
        <begin position="433"/>
        <end position="467"/>
    </location>
</feature>
<feature type="repeat" description="PPR 14">
    <location>
        <begin position="469"/>
        <end position="499"/>
    </location>
</feature>
<feature type="region of interest" description="Type E motif">
    <location>
        <begin position="504"/>
        <end position="579"/>
    </location>
</feature>
<feature type="region of interest" description="Type E(+) motif">
    <location>
        <begin position="580"/>
        <end position="610"/>
    </location>
</feature>
<reference key="1">
    <citation type="journal article" date="1999" name="Nature">
        <title>Sequence and analysis of chromosome 2 of the plant Arabidopsis thaliana.</title>
        <authorList>
            <person name="Lin X."/>
            <person name="Kaul S."/>
            <person name="Rounsley S.D."/>
            <person name="Shea T.P."/>
            <person name="Benito M.-I."/>
            <person name="Town C.D."/>
            <person name="Fujii C.Y."/>
            <person name="Mason T.M."/>
            <person name="Bowman C.L."/>
            <person name="Barnstead M.E."/>
            <person name="Feldblyum T.V."/>
            <person name="Buell C.R."/>
            <person name="Ketchum K.A."/>
            <person name="Lee J.J."/>
            <person name="Ronning C.M."/>
            <person name="Koo H.L."/>
            <person name="Moffat K.S."/>
            <person name="Cronin L.A."/>
            <person name="Shen M."/>
            <person name="Pai G."/>
            <person name="Van Aken S."/>
            <person name="Umayam L."/>
            <person name="Tallon L.J."/>
            <person name="Gill J.E."/>
            <person name="Adams M.D."/>
            <person name="Carrera A.J."/>
            <person name="Creasy T.H."/>
            <person name="Goodman H.M."/>
            <person name="Somerville C.R."/>
            <person name="Copenhaver G.P."/>
            <person name="Preuss D."/>
            <person name="Nierman W.C."/>
            <person name="White O."/>
            <person name="Eisen J.A."/>
            <person name="Salzberg S.L."/>
            <person name="Fraser C.M."/>
            <person name="Venter J.C."/>
        </authorList>
    </citation>
    <scope>NUCLEOTIDE SEQUENCE [LARGE SCALE GENOMIC DNA]</scope>
    <source>
        <strain>cv. Columbia</strain>
    </source>
</reference>
<reference key="2">
    <citation type="journal article" date="2017" name="Plant J.">
        <title>Araport11: a complete reannotation of the Arabidopsis thaliana reference genome.</title>
        <authorList>
            <person name="Cheng C.Y."/>
            <person name="Krishnakumar V."/>
            <person name="Chan A.P."/>
            <person name="Thibaud-Nissen F."/>
            <person name="Schobel S."/>
            <person name="Town C.D."/>
        </authorList>
    </citation>
    <scope>GENOME REANNOTATION</scope>
    <source>
        <strain>cv. Columbia</strain>
    </source>
</reference>
<reference key="3">
    <citation type="submission" date="2008-10" db="EMBL/GenBank/DDBJ databases">
        <title>Arabidopsis ORF clones.</title>
        <authorList>
            <person name="De Los Reyes C."/>
            <person name="Quan R."/>
            <person name="Chen H."/>
            <person name="Bautista V.R."/>
            <person name="Kim C.J."/>
            <person name="Ecker J.R."/>
        </authorList>
    </citation>
    <scope>NUCLEOTIDE SEQUENCE [LARGE SCALE MRNA]</scope>
    <source>
        <strain>cv. Columbia</strain>
    </source>
</reference>
<reference key="4">
    <citation type="journal article" date="2000" name="Plant Mol. Biol.">
        <title>In Arabidopsis thaliana, 1% of the genome codes for a novel protein family unique to plants.</title>
        <authorList>
            <person name="Aubourg S."/>
            <person name="Boudet N."/>
            <person name="Kreis M."/>
            <person name="Lecharny A."/>
        </authorList>
    </citation>
    <scope>GENE FAMILY</scope>
</reference>
<reference key="5">
    <citation type="journal article" date="2004" name="Plant Cell">
        <title>Genome-wide analysis of Arabidopsis pentatricopeptide repeat proteins reveals their essential role in organelle biogenesis.</title>
        <authorList>
            <person name="Lurin C."/>
            <person name="Andres C."/>
            <person name="Aubourg S."/>
            <person name="Bellaoui M."/>
            <person name="Bitton F."/>
            <person name="Bruyere C."/>
            <person name="Caboche M."/>
            <person name="Debast C."/>
            <person name="Gualberto J."/>
            <person name="Hoffmann B."/>
            <person name="Lecharny A."/>
            <person name="Le Ret M."/>
            <person name="Martin-Magniette M.-L."/>
            <person name="Mireau H."/>
            <person name="Peeters N."/>
            <person name="Renou J.-P."/>
            <person name="Szurek B."/>
            <person name="Taconnat L."/>
            <person name="Small I."/>
        </authorList>
    </citation>
    <scope>GENE FAMILY</scope>
</reference>
<comment type="subcellular location">
    <subcellularLocation>
        <location evidence="2">Mitochondrion</location>
    </subcellularLocation>
</comment>
<comment type="similarity">
    <text evidence="2">Belongs to the PPR family. PCMP-E subfamily.</text>
</comment>
<comment type="online information" name="Pentatricopeptide repeat proteins">
    <link uri="https://ppr.plantenergy.uwa.edu.au"/>
</comment>